<gene>
    <name type="primary">PLSC</name>
</gene>
<proteinExistence type="evidence at transcript level"/>
<accession>Q42870</accession>
<accession>Q40120</accession>
<comment type="function">
    <text>Converts lysophosphatidic acid (LPA) into phosphatidic acid by incorporating acyl moiety at the 2 position. This enzyme uses erucoyl-CoA as an acyl donor.</text>
</comment>
<comment type="catalytic activity">
    <reaction>
        <text>a 1-acyl-sn-glycero-3-phosphate + an acyl-CoA = a 1,2-diacyl-sn-glycero-3-phosphate + CoA</text>
        <dbReference type="Rhea" id="RHEA:19709"/>
        <dbReference type="ChEBI" id="CHEBI:57287"/>
        <dbReference type="ChEBI" id="CHEBI:57970"/>
        <dbReference type="ChEBI" id="CHEBI:58342"/>
        <dbReference type="ChEBI" id="CHEBI:58608"/>
        <dbReference type="EC" id="2.3.1.51"/>
    </reaction>
</comment>
<comment type="pathway">
    <text>Phospholipid metabolism; CDP-diacylglycerol biosynthesis; CDP-diacylglycerol from sn-glycerol 3-phosphate: step 2/3.</text>
</comment>
<comment type="subcellular location">
    <subcellularLocation>
        <location evidence="3">Membrane</location>
        <topology evidence="3">Multi-pass membrane protein</topology>
    </subcellularLocation>
</comment>
<comment type="domain">
    <text evidence="1">The HXXXXD motif is essential for acyltransferase activity and may constitute the binding site for the phosphate moiety of the glycerol-3-phosphate.</text>
</comment>
<comment type="similarity">
    <text evidence="3">Belongs to the 1-acyl-sn-glycerol-3-phosphate acyltransferase family.</text>
</comment>
<name>PLSC_LIMDO</name>
<reference key="1">
    <citation type="journal article" date="1995" name="Eur. J. Biochem.">
        <title>A plant acyltransferase involved in triacylglycerol biosynthesis complements an Escherichia coli sn-1-acylglycerol-3-phosphate acyltransferase mutant.</title>
        <authorList>
            <person name="Hanke C."/>
            <person name="Wolter F.P."/>
            <person name="Coleman J."/>
            <person name="Peterek G."/>
            <person name="Frentzen M."/>
        </authorList>
    </citation>
    <scope>NUCLEOTIDE SEQUENCE [MRNA]</scope>
</reference>
<reference key="2">
    <citation type="journal article" date="1995" name="Plant Mol. Biol.">
        <title>Identification of a cDNA that encodes a 1-acyl-sn-glycerol-3-phosphate acyltransferase from Limnanthes douglasii.</title>
        <authorList>
            <person name="Brown A.P."/>
            <person name="Brough C.L."/>
            <person name="Kroon J."/>
            <person name="Slabas A.R."/>
        </authorList>
    </citation>
    <scope>NUCLEOTIDE SEQUENCE [MRNA]</scope>
</reference>
<organism>
    <name type="scientific">Limnanthes douglasii</name>
    <name type="common">Douglas' meadowfoam</name>
    <dbReference type="NCBI Taxonomy" id="28973"/>
    <lineage>
        <taxon>Eukaryota</taxon>
        <taxon>Viridiplantae</taxon>
        <taxon>Streptophyta</taxon>
        <taxon>Embryophyta</taxon>
        <taxon>Tracheophyta</taxon>
        <taxon>Spermatophyta</taxon>
        <taxon>Magnoliopsida</taxon>
        <taxon>eudicotyledons</taxon>
        <taxon>Gunneridae</taxon>
        <taxon>Pentapetalae</taxon>
        <taxon>rosids</taxon>
        <taxon>malvids</taxon>
        <taxon>Brassicales</taxon>
        <taxon>Limnanthaceae</taxon>
        <taxon>Limnanthes</taxon>
    </lineage>
</organism>
<feature type="chain" id="PRO_0000208187" description="1-acyl-sn-glycerol-3-phosphate acyltransferase">
    <location>
        <begin position="1"/>
        <end position="281"/>
    </location>
</feature>
<feature type="transmembrane region" description="Helical" evidence="2">
    <location>
        <begin position="40"/>
        <end position="60"/>
    </location>
</feature>
<feature type="transmembrane region" description="Helical" evidence="2">
    <location>
        <begin position="71"/>
        <end position="91"/>
    </location>
</feature>
<feature type="transmembrane region" description="Helical" evidence="2">
    <location>
        <begin position="110"/>
        <end position="130"/>
    </location>
</feature>
<feature type="short sequence motif" description="HXXXXD motif">
    <location>
        <begin position="109"/>
        <end position="114"/>
    </location>
</feature>
<feature type="sequence conflict" description="In Ref. 2; CAA86877." evidence="3" ref="2">
    <original>I</original>
    <variation>V</variation>
    <location>
        <position position="46"/>
    </location>
</feature>
<feature type="sequence conflict" description="In Ref. 2; CAA86877." evidence="3" ref="2">
    <original>R</original>
    <variation>G</variation>
    <location>
        <position position="188"/>
    </location>
</feature>
<feature type="sequence conflict" description="In Ref. 2; CAA86877." evidence="3" ref="2">
    <original>V</original>
    <variation>I</variation>
    <location>
        <position position="262"/>
    </location>
</feature>
<feature type="sequence conflict" description="In Ref. 2; CAA86877." evidence="3" ref="2">
    <original>N</original>
    <variation>K</variation>
    <location>
        <position position="281"/>
    </location>
</feature>
<dbReference type="EC" id="2.3.1.51"/>
<dbReference type="EMBL" id="X83266">
    <property type="protein sequence ID" value="CAA58239.1"/>
    <property type="molecule type" value="mRNA"/>
</dbReference>
<dbReference type="EMBL" id="Z46836">
    <property type="protein sequence ID" value="CAA86877.1"/>
    <property type="molecule type" value="mRNA"/>
</dbReference>
<dbReference type="PIR" id="S60477">
    <property type="entry name" value="S60477"/>
</dbReference>
<dbReference type="SMR" id="Q42870"/>
<dbReference type="BRENDA" id="2.3.1.51">
    <property type="organism ID" value="3028"/>
</dbReference>
<dbReference type="UniPathway" id="UPA00557">
    <property type="reaction ID" value="UER00613"/>
</dbReference>
<dbReference type="GO" id="GO:0005783">
    <property type="term" value="C:endoplasmic reticulum"/>
    <property type="evidence" value="ECO:0007669"/>
    <property type="project" value="TreeGrafter"/>
</dbReference>
<dbReference type="GO" id="GO:0016020">
    <property type="term" value="C:membrane"/>
    <property type="evidence" value="ECO:0007669"/>
    <property type="project" value="UniProtKB-SubCell"/>
</dbReference>
<dbReference type="GO" id="GO:0003841">
    <property type="term" value="F:1-acylglycerol-3-phosphate O-acyltransferase activity"/>
    <property type="evidence" value="ECO:0007669"/>
    <property type="project" value="UniProtKB-EC"/>
</dbReference>
<dbReference type="GO" id="GO:0016024">
    <property type="term" value="P:CDP-diacylglycerol biosynthetic process"/>
    <property type="evidence" value="ECO:0007669"/>
    <property type="project" value="UniProtKB-UniPathway"/>
</dbReference>
<dbReference type="GO" id="GO:0006654">
    <property type="term" value="P:phosphatidic acid biosynthetic process"/>
    <property type="evidence" value="ECO:0007669"/>
    <property type="project" value="TreeGrafter"/>
</dbReference>
<dbReference type="CDD" id="cd07989">
    <property type="entry name" value="LPLAT_AGPAT-like"/>
    <property type="match status" value="1"/>
</dbReference>
<dbReference type="InterPro" id="IPR004552">
    <property type="entry name" value="AGP_acyltrans"/>
</dbReference>
<dbReference type="InterPro" id="IPR002123">
    <property type="entry name" value="Plipid/glycerol_acylTrfase"/>
</dbReference>
<dbReference type="NCBIfam" id="TIGR00530">
    <property type="entry name" value="AGP_acyltrn"/>
    <property type="match status" value="1"/>
</dbReference>
<dbReference type="PANTHER" id="PTHR10434">
    <property type="entry name" value="1-ACYL-SN-GLYCEROL-3-PHOSPHATE ACYLTRANSFERASE"/>
    <property type="match status" value="1"/>
</dbReference>
<dbReference type="PANTHER" id="PTHR10434:SF11">
    <property type="entry name" value="1-ACYL-SN-GLYCEROL-3-PHOSPHATE ACYLTRANSFERASE"/>
    <property type="match status" value="1"/>
</dbReference>
<dbReference type="Pfam" id="PF01553">
    <property type="entry name" value="Acyltransferase"/>
    <property type="match status" value="1"/>
</dbReference>
<dbReference type="SMART" id="SM00563">
    <property type="entry name" value="PlsC"/>
    <property type="match status" value="1"/>
</dbReference>
<dbReference type="SUPFAM" id="SSF69593">
    <property type="entry name" value="Glycerol-3-phosphate (1)-acyltransferase"/>
    <property type="match status" value="1"/>
</dbReference>
<keyword id="KW-0012">Acyltransferase</keyword>
<keyword id="KW-0444">Lipid biosynthesis</keyword>
<keyword id="KW-0443">Lipid metabolism</keyword>
<keyword id="KW-0472">Membrane</keyword>
<keyword id="KW-0594">Phospholipid biosynthesis</keyword>
<keyword id="KW-1208">Phospholipid metabolism</keyword>
<keyword id="KW-0808">Transferase</keyword>
<keyword id="KW-0812">Transmembrane</keyword>
<keyword id="KW-1133">Transmembrane helix</keyword>
<protein>
    <recommendedName>
        <fullName>1-acyl-sn-glycerol-3-phosphate acyltransferase</fullName>
        <shortName>1-AGP acyltransferase</shortName>
        <shortName>1-AGPAT</shortName>
        <ecNumber>2.3.1.51</ecNumber>
    </recommendedName>
    <alternativeName>
        <fullName>Lysophosphatidic acid acyltransferase</fullName>
        <shortName>LPAAT</shortName>
    </alternativeName>
</protein>
<sequence>MAKTRTSSLRNRRQLKPAVAATADDDKDGVFMVLLSCFKIFVCFAIVLITAVAWGLIMVLLLPWPYMRIRLGNLYGHIIGGLVIWIYGIPIKIQGSEHTKKRAIYISNHASPIDAFFVMWLAPIGTVGVAKKEVIWYPLLGQLYTLAHHIRIDRSNPAAAIQSMKEAVRVITEKNLSLIMFPEGTRSRDGRLLPFKKGFVHLALQSHLPIVPMILTGTHLAWRKGTFRVRPVPITVKYLPPINTDDWTVDKIDDYVKMIHDVYVRNLPASQKPLGSTNRSN</sequence>
<evidence type="ECO:0000250" key="1"/>
<evidence type="ECO:0000255" key="2"/>
<evidence type="ECO:0000305" key="3"/>